<reference key="1">
    <citation type="journal article" date="2003" name="Nature">
        <title>Genome sequence of Bacillus cereus and comparative analysis with Bacillus anthracis.</title>
        <authorList>
            <person name="Ivanova N."/>
            <person name="Sorokin A."/>
            <person name="Anderson I."/>
            <person name="Galleron N."/>
            <person name="Candelon B."/>
            <person name="Kapatral V."/>
            <person name="Bhattacharyya A."/>
            <person name="Reznik G."/>
            <person name="Mikhailova N."/>
            <person name="Lapidus A."/>
            <person name="Chu L."/>
            <person name="Mazur M."/>
            <person name="Goltsman E."/>
            <person name="Larsen N."/>
            <person name="D'Souza M."/>
            <person name="Walunas T."/>
            <person name="Grechkin Y."/>
            <person name="Pusch G."/>
            <person name="Haselkorn R."/>
            <person name="Fonstein M."/>
            <person name="Ehrlich S.D."/>
            <person name="Overbeek R."/>
            <person name="Kyrpides N.C."/>
        </authorList>
    </citation>
    <scope>NUCLEOTIDE SEQUENCE [LARGE SCALE GENOMIC DNA]</scope>
    <source>
        <strain>ATCC 14579 / DSM 31 / CCUG 7414 / JCM 2152 / NBRC 15305 / NCIMB 9373 / NCTC 2599 / NRRL B-3711</strain>
    </source>
</reference>
<proteinExistence type="inferred from homology"/>
<dbReference type="EC" id="6.3.4.3" evidence="1"/>
<dbReference type="EMBL" id="AE016877">
    <property type="protein sequence ID" value="AAP09070.1"/>
    <property type="molecule type" value="Genomic_DNA"/>
</dbReference>
<dbReference type="RefSeq" id="NP_831869.1">
    <property type="nucleotide sequence ID" value="NC_004722.1"/>
</dbReference>
<dbReference type="RefSeq" id="WP_011110057.1">
    <property type="nucleotide sequence ID" value="NC_004722.1"/>
</dbReference>
<dbReference type="SMR" id="Q81E87"/>
<dbReference type="STRING" id="226900.BC_2101"/>
<dbReference type="MetOSite" id="Q81E87"/>
<dbReference type="KEGG" id="bce:BC2101"/>
<dbReference type="PATRIC" id="fig|226900.8.peg.2116"/>
<dbReference type="HOGENOM" id="CLU_003601_3_3_9"/>
<dbReference type="OrthoDB" id="9761733at2"/>
<dbReference type="UniPathway" id="UPA00193"/>
<dbReference type="Proteomes" id="UP000001417">
    <property type="component" value="Chromosome"/>
</dbReference>
<dbReference type="GO" id="GO:0005524">
    <property type="term" value="F:ATP binding"/>
    <property type="evidence" value="ECO:0007669"/>
    <property type="project" value="UniProtKB-UniRule"/>
</dbReference>
<dbReference type="GO" id="GO:0004329">
    <property type="term" value="F:formate-tetrahydrofolate ligase activity"/>
    <property type="evidence" value="ECO:0007669"/>
    <property type="project" value="UniProtKB-UniRule"/>
</dbReference>
<dbReference type="GO" id="GO:0035999">
    <property type="term" value="P:tetrahydrofolate interconversion"/>
    <property type="evidence" value="ECO:0007669"/>
    <property type="project" value="UniProtKB-UniRule"/>
</dbReference>
<dbReference type="CDD" id="cd00477">
    <property type="entry name" value="FTHFS"/>
    <property type="match status" value="1"/>
</dbReference>
<dbReference type="FunFam" id="3.30.1510.10:FF:000001">
    <property type="entry name" value="Formate--tetrahydrofolate ligase"/>
    <property type="match status" value="1"/>
</dbReference>
<dbReference type="FunFam" id="3.10.410.10:FF:000001">
    <property type="entry name" value="Putative formate--tetrahydrofolate ligase"/>
    <property type="match status" value="1"/>
</dbReference>
<dbReference type="Gene3D" id="3.30.1510.10">
    <property type="entry name" value="Domain 2, N(10)-formyltetrahydrofolate synthetase"/>
    <property type="match status" value="1"/>
</dbReference>
<dbReference type="Gene3D" id="3.10.410.10">
    <property type="entry name" value="Formyltetrahydrofolate synthetase, domain 3"/>
    <property type="match status" value="1"/>
</dbReference>
<dbReference type="Gene3D" id="3.40.50.300">
    <property type="entry name" value="P-loop containing nucleotide triphosphate hydrolases"/>
    <property type="match status" value="1"/>
</dbReference>
<dbReference type="HAMAP" id="MF_01543">
    <property type="entry name" value="FTHFS"/>
    <property type="match status" value="1"/>
</dbReference>
<dbReference type="InterPro" id="IPR000559">
    <property type="entry name" value="Formate_THF_ligase"/>
</dbReference>
<dbReference type="InterPro" id="IPR020628">
    <property type="entry name" value="Formate_THF_ligase_CS"/>
</dbReference>
<dbReference type="InterPro" id="IPR027417">
    <property type="entry name" value="P-loop_NTPase"/>
</dbReference>
<dbReference type="NCBIfam" id="NF010030">
    <property type="entry name" value="PRK13505.1"/>
    <property type="match status" value="1"/>
</dbReference>
<dbReference type="Pfam" id="PF01268">
    <property type="entry name" value="FTHFS"/>
    <property type="match status" value="1"/>
</dbReference>
<dbReference type="SUPFAM" id="SSF52540">
    <property type="entry name" value="P-loop containing nucleoside triphosphate hydrolases"/>
    <property type="match status" value="1"/>
</dbReference>
<dbReference type="PROSITE" id="PS00721">
    <property type="entry name" value="FTHFS_1"/>
    <property type="match status" value="1"/>
</dbReference>
<dbReference type="PROSITE" id="PS00722">
    <property type="entry name" value="FTHFS_2"/>
    <property type="match status" value="1"/>
</dbReference>
<name>FTHS_BACCR</name>
<gene>
    <name evidence="1" type="primary">fhs</name>
    <name type="ordered locus">BC_2101</name>
</gene>
<organism>
    <name type="scientific">Bacillus cereus (strain ATCC 14579 / DSM 31 / CCUG 7414 / JCM 2152 / NBRC 15305 / NCIMB 9373 / NCTC 2599 / NRRL B-3711)</name>
    <dbReference type="NCBI Taxonomy" id="226900"/>
    <lineage>
        <taxon>Bacteria</taxon>
        <taxon>Bacillati</taxon>
        <taxon>Bacillota</taxon>
        <taxon>Bacilli</taxon>
        <taxon>Bacillales</taxon>
        <taxon>Bacillaceae</taxon>
        <taxon>Bacillus</taxon>
        <taxon>Bacillus cereus group</taxon>
    </lineage>
</organism>
<sequence length="562" mass="60507">MTTTTTVKSDIEIAQEASMKKIQEIAADLNILEDELEPYGHYKGKLSLDIFKRLQDEKDGKVVLVTAINPTPAGEGKSTVTVGLGQAFNKIGKKTVIALREPSLGPTMGLKGGAAGGGFSQVVPMEDINLHFTGDIHAITTANNALAAFIDNHIQQGNTLGIDTRKIVWKRCVDLNDRALRNVVIGLGGPVQGVPREDGFDITVASEIMAVFCLATDIQDLKARLSRIVVAYNFANQPVTVKDLGVEGALTLLLKDALKPNLVQTLENTPAIIHGGPFANIAHGCNSVIATTMAAKLGDYVITEAGFGADLGAEKFLDIKARAAGIKPEAVVIVATIRALKMHGGVAKDQLKEENVDALAKGMENLQKHVETIQSFGVPFVIAINKFITDTDAEVTYLQEWCNERGYAVSLTEVWEKGGQGGVDLAEKVLKEIEKGENNYAPLYELELPLEEKIRTIAQKVYGAKDIEFAPKARKQLAQYEGEGWSNLPVCMAKTQYSLSDDVTKLGRPSDFIVTIRELKPSIGAGFIVALTGTMLTMPGLPKQPAALQMDVNEDGKAVGLF</sequence>
<accession>Q81E87</accession>
<evidence type="ECO:0000255" key="1">
    <source>
        <dbReference type="HAMAP-Rule" id="MF_01543"/>
    </source>
</evidence>
<keyword id="KW-0067">ATP-binding</keyword>
<keyword id="KW-0436">Ligase</keyword>
<keyword id="KW-0547">Nucleotide-binding</keyword>
<keyword id="KW-0554">One-carbon metabolism</keyword>
<keyword id="KW-1185">Reference proteome</keyword>
<feature type="chain" id="PRO_0000199329" description="Formate--tetrahydrofolate ligase">
    <location>
        <begin position="1"/>
        <end position="562"/>
    </location>
</feature>
<feature type="binding site" evidence="1">
    <location>
        <begin position="71"/>
        <end position="78"/>
    </location>
    <ligand>
        <name>ATP</name>
        <dbReference type="ChEBI" id="CHEBI:30616"/>
    </ligand>
</feature>
<protein>
    <recommendedName>
        <fullName evidence="1">Formate--tetrahydrofolate ligase</fullName>
        <ecNumber evidence="1">6.3.4.3</ecNumber>
    </recommendedName>
    <alternativeName>
        <fullName evidence="1">Formyltetrahydrofolate synthetase</fullName>
        <shortName evidence="1">FHS</shortName>
        <shortName evidence="1">FTHFS</shortName>
    </alternativeName>
</protein>
<comment type="catalytic activity">
    <reaction evidence="1">
        <text>(6S)-5,6,7,8-tetrahydrofolate + formate + ATP = (6R)-10-formyltetrahydrofolate + ADP + phosphate</text>
        <dbReference type="Rhea" id="RHEA:20221"/>
        <dbReference type="ChEBI" id="CHEBI:15740"/>
        <dbReference type="ChEBI" id="CHEBI:30616"/>
        <dbReference type="ChEBI" id="CHEBI:43474"/>
        <dbReference type="ChEBI" id="CHEBI:57453"/>
        <dbReference type="ChEBI" id="CHEBI:195366"/>
        <dbReference type="ChEBI" id="CHEBI:456216"/>
        <dbReference type="EC" id="6.3.4.3"/>
    </reaction>
</comment>
<comment type="pathway">
    <text evidence="1">One-carbon metabolism; tetrahydrofolate interconversion.</text>
</comment>
<comment type="similarity">
    <text evidence="1">Belongs to the formate--tetrahydrofolate ligase family.</text>
</comment>